<geneLocation type="plasmid">
    <name>pTi15955</name>
</geneLocation>
<gene>
    <name type="primary">virB11</name>
</gene>
<protein>
    <recommendedName>
        <fullName>Protein VirB11</fullName>
    </recommendedName>
</protein>
<keyword id="KW-0067">ATP-binding</keyword>
<keyword id="KW-0192">Crown gall tumor</keyword>
<keyword id="KW-0963">Cytoplasm</keyword>
<keyword id="KW-0547">Nucleotide-binding</keyword>
<keyword id="KW-0597">Phosphoprotein</keyword>
<keyword id="KW-0614">Plasmid</keyword>
<keyword id="KW-0813">Transport</keyword>
<sequence length="343" mass="38009">MEVDPQLRFLLKPILEWLDDPKTEEIAINRPGEAFVRQAGIFTKMPLPVSYDDLEDIAILAGALRKQDVGPRNPLCATELPGGERLQICLPPTVPSGTVSLTIRRPSSRVSGLKEVSSRYDASRWNQWQTRRKRQNQDDEAILQHFDNGDLEAFLHACVVSRLTMLLCGPTGSGKTTMSKTLISAIPPQERLITIEDTLELVIPHDNHVRLLYSKNGAGLGAVSAEHLLQASLRMRPDRILLGEMRDDAAWAYLSEVVSGHPGSISTIHGANPIQGFKKLFSLVKSSVQGASLEDRTLIDMLSTAIDVIIPFRAYEDVYEVGEIWLAADARRRGETIGDLLNQ</sequence>
<name>VIRBB_AGRT9</name>
<feature type="chain" id="PRO_0000207304" description="Protein VirB11">
    <location>
        <begin position="1"/>
        <end position="343"/>
    </location>
</feature>
<feature type="binding site" evidence="1">
    <location>
        <begin position="169"/>
        <end position="176"/>
    </location>
    <ligand>
        <name>ATP</name>
        <dbReference type="ChEBI" id="CHEBI:30616"/>
    </ligand>
</feature>
<reference key="1">
    <citation type="journal article" date="1988" name="Nucleic Acids Res.">
        <title>Analysis of the complete nucleotide sequence of the Agrobacterium tumefaciens virB operon.</title>
        <authorList>
            <person name="Thompson D.V."/>
            <person name="Melchers L.S."/>
            <person name="Idler K.B."/>
            <person name="Shilperoort R.A."/>
            <person name="Hooykaas P.J.J."/>
        </authorList>
    </citation>
    <scope>NUCLEOTIDE SEQUENCE [GENOMIC DNA]</scope>
</reference>
<evidence type="ECO:0000255" key="1"/>
<evidence type="ECO:0000305" key="2"/>
<comment type="function">
    <text>Required for the transfer of T-DNA to plants. Couples energy, by means of ATP hydrolysis, to T-DNA transport.</text>
</comment>
<comment type="subcellular location">
    <subcellularLocation>
        <location evidence="2">Cytoplasm</location>
    </subcellularLocation>
</comment>
<comment type="PTM">
    <text>Autophosphorylated.</text>
</comment>
<comment type="similarity">
    <text evidence="2">Belongs to the GSP E family.</text>
</comment>
<dbReference type="EMBL" id="X06826">
    <property type="protein sequence ID" value="CAA29982.1"/>
    <property type="molecule type" value="Genomic_DNA"/>
</dbReference>
<dbReference type="PIR" id="S00787">
    <property type="entry name" value="BXAG55"/>
</dbReference>
<dbReference type="RefSeq" id="NP_059809.1">
    <property type="nucleotide sequence ID" value="NC_002377.1"/>
</dbReference>
<dbReference type="SMR" id="P0A3F9"/>
<dbReference type="PHI-base" id="PHI:11108"/>
<dbReference type="GO" id="GO:0005737">
    <property type="term" value="C:cytoplasm"/>
    <property type="evidence" value="ECO:0007669"/>
    <property type="project" value="UniProtKB-SubCell"/>
</dbReference>
<dbReference type="GO" id="GO:0043684">
    <property type="term" value="C:type IV secretion system complex"/>
    <property type="evidence" value="ECO:0007669"/>
    <property type="project" value="InterPro"/>
</dbReference>
<dbReference type="GO" id="GO:0005524">
    <property type="term" value="F:ATP binding"/>
    <property type="evidence" value="ECO:0007669"/>
    <property type="project" value="UniProtKB-KW"/>
</dbReference>
<dbReference type="GO" id="GO:0016887">
    <property type="term" value="F:ATP hydrolysis activity"/>
    <property type="evidence" value="ECO:0007669"/>
    <property type="project" value="InterPro"/>
</dbReference>
<dbReference type="GO" id="GO:0044097">
    <property type="term" value="P:secretion by the type IV secretion system"/>
    <property type="evidence" value="ECO:0007669"/>
    <property type="project" value="InterPro"/>
</dbReference>
<dbReference type="CDD" id="cd01130">
    <property type="entry name" value="VirB11-like_ATPase"/>
    <property type="match status" value="1"/>
</dbReference>
<dbReference type="Gene3D" id="3.30.450.90">
    <property type="match status" value="1"/>
</dbReference>
<dbReference type="Gene3D" id="3.40.50.300">
    <property type="entry name" value="P-loop containing nucleotide triphosphate hydrolases"/>
    <property type="match status" value="1"/>
</dbReference>
<dbReference type="InterPro" id="IPR027417">
    <property type="entry name" value="P-loop_NTPase"/>
</dbReference>
<dbReference type="InterPro" id="IPR001482">
    <property type="entry name" value="T2SS/T4SS_dom"/>
</dbReference>
<dbReference type="InterPro" id="IPR050921">
    <property type="entry name" value="T4SS_GSP_E_ATPase"/>
</dbReference>
<dbReference type="InterPro" id="IPR014155">
    <property type="entry name" value="VirB11"/>
</dbReference>
<dbReference type="NCBIfam" id="NF010425">
    <property type="entry name" value="PRK13851.1"/>
    <property type="match status" value="1"/>
</dbReference>
<dbReference type="NCBIfam" id="TIGR02788">
    <property type="entry name" value="VirB11"/>
    <property type="match status" value="1"/>
</dbReference>
<dbReference type="PANTHER" id="PTHR30486">
    <property type="entry name" value="TWITCHING MOTILITY PROTEIN PILT"/>
    <property type="match status" value="1"/>
</dbReference>
<dbReference type="PANTHER" id="PTHR30486:SF6">
    <property type="entry name" value="TYPE IV PILUS RETRACTATION ATPASE PILT"/>
    <property type="match status" value="1"/>
</dbReference>
<dbReference type="Pfam" id="PF00437">
    <property type="entry name" value="T2SSE"/>
    <property type="match status" value="1"/>
</dbReference>
<dbReference type="SUPFAM" id="SSF52540">
    <property type="entry name" value="P-loop containing nucleoside triphosphate hydrolases"/>
    <property type="match status" value="1"/>
</dbReference>
<dbReference type="PROSITE" id="PS00662">
    <property type="entry name" value="T2SP_E"/>
    <property type="match status" value="1"/>
</dbReference>
<proteinExistence type="inferred from homology"/>
<accession>P0A3F9</accession>
<accession>P05360</accession>
<organism>
    <name type="scientific">Agrobacterium tumefaciens (strain 15955)</name>
    <dbReference type="NCBI Taxonomy" id="190386"/>
    <lineage>
        <taxon>Bacteria</taxon>
        <taxon>Pseudomonadati</taxon>
        <taxon>Pseudomonadota</taxon>
        <taxon>Alphaproteobacteria</taxon>
        <taxon>Hyphomicrobiales</taxon>
        <taxon>Rhizobiaceae</taxon>
        <taxon>Rhizobium/Agrobacterium group</taxon>
        <taxon>Agrobacterium</taxon>
        <taxon>Agrobacterium tumefaciens complex</taxon>
    </lineage>
</organism>